<gene>
    <name evidence="1" type="primary">hfq</name>
    <name type="ordered locus">HCH_05383</name>
</gene>
<dbReference type="EMBL" id="CP000155">
    <property type="protein sequence ID" value="ABC32052.1"/>
    <property type="molecule type" value="Genomic_DNA"/>
</dbReference>
<dbReference type="RefSeq" id="WP_011399116.1">
    <property type="nucleotide sequence ID" value="NC_007645.1"/>
</dbReference>
<dbReference type="SMR" id="Q2SBC2"/>
<dbReference type="STRING" id="349521.HCH_05383"/>
<dbReference type="KEGG" id="hch:HCH_05383"/>
<dbReference type="eggNOG" id="COG1923">
    <property type="taxonomic scope" value="Bacteria"/>
</dbReference>
<dbReference type="HOGENOM" id="CLU_113688_2_2_6"/>
<dbReference type="OrthoDB" id="9799751at2"/>
<dbReference type="Proteomes" id="UP000000238">
    <property type="component" value="Chromosome"/>
</dbReference>
<dbReference type="GO" id="GO:0005829">
    <property type="term" value="C:cytosol"/>
    <property type="evidence" value="ECO:0007669"/>
    <property type="project" value="TreeGrafter"/>
</dbReference>
<dbReference type="GO" id="GO:0003723">
    <property type="term" value="F:RNA binding"/>
    <property type="evidence" value="ECO:0007669"/>
    <property type="project" value="UniProtKB-UniRule"/>
</dbReference>
<dbReference type="GO" id="GO:0006355">
    <property type="term" value="P:regulation of DNA-templated transcription"/>
    <property type="evidence" value="ECO:0007669"/>
    <property type="project" value="InterPro"/>
</dbReference>
<dbReference type="GO" id="GO:0043487">
    <property type="term" value="P:regulation of RNA stability"/>
    <property type="evidence" value="ECO:0007669"/>
    <property type="project" value="TreeGrafter"/>
</dbReference>
<dbReference type="GO" id="GO:0045974">
    <property type="term" value="P:regulation of translation, ncRNA-mediated"/>
    <property type="evidence" value="ECO:0007669"/>
    <property type="project" value="TreeGrafter"/>
</dbReference>
<dbReference type="CDD" id="cd01716">
    <property type="entry name" value="Hfq"/>
    <property type="match status" value="1"/>
</dbReference>
<dbReference type="FunFam" id="2.30.30.100:FF:000001">
    <property type="entry name" value="RNA-binding protein Hfq"/>
    <property type="match status" value="1"/>
</dbReference>
<dbReference type="Gene3D" id="2.30.30.100">
    <property type="match status" value="1"/>
</dbReference>
<dbReference type="HAMAP" id="MF_00436">
    <property type="entry name" value="Hfq"/>
    <property type="match status" value="1"/>
</dbReference>
<dbReference type="InterPro" id="IPR005001">
    <property type="entry name" value="Hfq"/>
</dbReference>
<dbReference type="InterPro" id="IPR010920">
    <property type="entry name" value="LSM_dom_sf"/>
</dbReference>
<dbReference type="InterPro" id="IPR047575">
    <property type="entry name" value="Sm"/>
</dbReference>
<dbReference type="NCBIfam" id="TIGR02383">
    <property type="entry name" value="Hfq"/>
    <property type="match status" value="1"/>
</dbReference>
<dbReference type="NCBIfam" id="NF001602">
    <property type="entry name" value="PRK00395.1"/>
    <property type="match status" value="1"/>
</dbReference>
<dbReference type="PANTHER" id="PTHR34772">
    <property type="entry name" value="RNA-BINDING PROTEIN HFQ"/>
    <property type="match status" value="1"/>
</dbReference>
<dbReference type="PANTHER" id="PTHR34772:SF1">
    <property type="entry name" value="RNA-BINDING PROTEIN HFQ"/>
    <property type="match status" value="1"/>
</dbReference>
<dbReference type="Pfam" id="PF17209">
    <property type="entry name" value="Hfq"/>
    <property type="match status" value="1"/>
</dbReference>
<dbReference type="SUPFAM" id="SSF50182">
    <property type="entry name" value="Sm-like ribonucleoproteins"/>
    <property type="match status" value="1"/>
</dbReference>
<dbReference type="PROSITE" id="PS52002">
    <property type="entry name" value="SM"/>
    <property type="match status" value="1"/>
</dbReference>
<proteinExistence type="inferred from homology"/>
<keyword id="KW-1185">Reference proteome</keyword>
<keyword id="KW-0694">RNA-binding</keyword>
<keyword id="KW-0346">Stress response</keyword>
<accession>Q2SBC2</accession>
<reference key="1">
    <citation type="journal article" date="2005" name="Nucleic Acids Res.">
        <title>Genomic blueprint of Hahella chejuensis, a marine microbe producing an algicidal agent.</title>
        <authorList>
            <person name="Jeong H."/>
            <person name="Yim J.H."/>
            <person name="Lee C."/>
            <person name="Choi S.-H."/>
            <person name="Park Y.K."/>
            <person name="Yoon S.H."/>
            <person name="Hur C.-G."/>
            <person name="Kang H.-Y."/>
            <person name="Kim D."/>
            <person name="Lee H.H."/>
            <person name="Park K.H."/>
            <person name="Park S.-H."/>
            <person name="Park H.-S."/>
            <person name="Lee H.K."/>
            <person name="Oh T.K."/>
            <person name="Kim J.F."/>
        </authorList>
    </citation>
    <scope>NUCLEOTIDE SEQUENCE [LARGE SCALE GENOMIC DNA]</scope>
    <source>
        <strain>KCTC 2396</strain>
    </source>
</reference>
<evidence type="ECO:0000255" key="1">
    <source>
        <dbReference type="HAMAP-Rule" id="MF_00436"/>
    </source>
</evidence>
<evidence type="ECO:0000255" key="2">
    <source>
        <dbReference type="PROSITE-ProRule" id="PRU01346"/>
    </source>
</evidence>
<feature type="chain" id="PRO_0000265162" description="RNA-binding protein Hfq">
    <location>
        <begin position="1"/>
        <end position="83"/>
    </location>
</feature>
<feature type="domain" description="Sm" evidence="2">
    <location>
        <begin position="9"/>
        <end position="68"/>
    </location>
</feature>
<organism>
    <name type="scientific">Hahella chejuensis (strain KCTC 2396)</name>
    <dbReference type="NCBI Taxonomy" id="349521"/>
    <lineage>
        <taxon>Bacteria</taxon>
        <taxon>Pseudomonadati</taxon>
        <taxon>Pseudomonadota</taxon>
        <taxon>Gammaproteobacteria</taxon>
        <taxon>Oceanospirillales</taxon>
        <taxon>Hahellaceae</taxon>
        <taxon>Hahella</taxon>
    </lineage>
</organism>
<sequence length="83" mass="9172">MSKGQSLQDPYLNALRKERIPVSIFLVNGIKLQGQIESFDQFVILLKNTVSQMVYKHAISTVVPARNVRIAAQGEGENEASNA</sequence>
<protein>
    <recommendedName>
        <fullName evidence="1">RNA-binding protein Hfq</fullName>
    </recommendedName>
</protein>
<name>HFQ_HAHCH</name>
<comment type="function">
    <text evidence="1">RNA chaperone that binds small regulatory RNA (sRNAs) and mRNAs to facilitate mRNA translational regulation in response to envelope stress, environmental stress and changes in metabolite concentrations. Also binds with high specificity to tRNAs.</text>
</comment>
<comment type="subunit">
    <text evidence="1">Homohexamer.</text>
</comment>
<comment type="similarity">
    <text evidence="1">Belongs to the Hfq family.</text>
</comment>